<name>SECP_APIME</name>
<proteinExistence type="evidence at protein level"/>
<sequence length="77" mass="8664">MKNYSKNATHLITVLLFSFVVILLIIPSKCEAVSNDMQPLEARSADLVPEPRYIIDVPPRCPPGSKFIKNRCRVIVP</sequence>
<accession>P02852</accession>
<accession>Q8ISJ3</accession>
<organism>
    <name type="scientific">Apis mellifera</name>
    <name type="common">Honeybee</name>
    <dbReference type="NCBI Taxonomy" id="7460"/>
    <lineage>
        <taxon>Eukaryota</taxon>
        <taxon>Metazoa</taxon>
        <taxon>Ecdysozoa</taxon>
        <taxon>Arthropoda</taxon>
        <taxon>Hexapoda</taxon>
        <taxon>Insecta</taxon>
        <taxon>Pterygota</taxon>
        <taxon>Neoptera</taxon>
        <taxon>Endopterygota</taxon>
        <taxon>Hymenoptera</taxon>
        <taxon>Apocrita</taxon>
        <taxon>Aculeata</taxon>
        <taxon>Apoidea</taxon>
        <taxon>Anthophila</taxon>
        <taxon>Apidae</taxon>
        <taxon>Apis</taxon>
    </lineage>
</organism>
<evidence type="ECO:0000250" key="1">
    <source>
        <dbReference type="UniProtKB" id="A0A0K1YW63"/>
    </source>
</evidence>
<evidence type="ECO:0000255" key="2"/>
<evidence type="ECO:0000269" key="3">
    <source>
    </source>
</evidence>
<evidence type="ECO:0000269" key="4">
    <source>
    </source>
</evidence>
<evidence type="ECO:0000269" key="5">
    <source ref="3"/>
</evidence>
<evidence type="ECO:0000305" key="6"/>
<evidence type="ECO:0000305" key="7">
    <source ref="3"/>
</evidence>
<dbReference type="EMBL" id="M12598">
    <property type="protein sequence ID" value="AAA27733.1"/>
    <property type="molecule type" value="mRNA"/>
</dbReference>
<dbReference type="EMBL" id="AY082691">
    <property type="protein sequence ID" value="AAL92482.1"/>
    <property type="molecule type" value="mRNA"/>
</dbReference>
<dbReference type="PIR" id="A91139">
    <property type="entry name" value="WSHB"/>
</dbReference>
<dbReference type="RefSeq" id="NP_001011618.1">
    <property type="nucleotide sequence ID" value="NM_001011618.1"/>
</dbReference>
<dbReference type="RefSeq" id="XP_016767767.2">
    <property type="nucleotide sequence ID" value="XM_016912278.2"/>
</dbReference>
<dbReference type="STRING" id="7460.P02852"/>
<dbReference type="PaxDb" id="7460-GB52317-PA"/>
<dbReference type="EnsemblMetazoa" id="XM_016912278">
    <property type="protein sequence ID" value="XP_016767767"/>
    <property type="gene ID" value="LOC406145"/>
</dbReference>
<dbReference type="GeneID" id="406145"/>
<dbReference type="KEGG" id="ame:406145"/>
<dbReference type="InParanoid" id="P02852"/>
<dbReference type="OrthoDB" id="7607361at2759"/>
<dbReference type="Proteomes" id="UP000005203">
    <property type="component" value="Linkage group LG5"/>
</dbReference>
<dbReference type="GO" id="GO:0005576">
    <property type="term" value="C:extracellular region"/>
    <property type="evidence" value="ECO:0007669"/>
    <property type="project" value="UniProtKB-SubCell"/>
</dbReference>
<dbReference type="GO" id="GO:0004867">
    <property type="term" value="F:serine-type endopeptidase inhibitor activity"/>
    <property type="evidence" value="ECO:0007669"/>
    <property type="project" value="UniProtKB-KW"/>
</dbReference>
<dbReference type="GO" id="GO:0090729">
    <property type="term" value="F:toxin activity"/>
    <property type="evidence" value="ECO:0000314"/>
    <property type="project" value="UniProtKB"/>
</dbReference>
<dbReference type="GO" id="GO:0042742">
    <property type="term" value="P:defense response to bacterium"/>
    <property type="evidence" value="ECO:0007669"/>
    <property type="project" value="UniProtKB-KW"/>
</dbReference>
<dbReference type="GO" id="GO:0050832">
    <property type="term" value="P:defense response to fungus"/>
    <property type="evidence" value="ECO:0007669"/>
    <property type="project" value="UniProtKB-KW"/>
</dbReference>
<dbReference type="GO" id="GO:0045087">
    <property type="term" value="P:innate immune response"/>
    <property type="evidence" value="ECO:0007669"/>
    <property type="project" value="UniProtKB-KW"/>
</dbReference>
<dbReference type="GO" id="GO:0031640">
    <property type="term" value="P:killing of cells of another organism"/>
    <property type="evidence" value="ECO:0007669"/>
    <property type="project" value="UniProtKB-KW"/>
</dbReference>
<dbReference type="GO" id="GO:0035738">
    <property type="term" value="P:venom-mediated perturbation of biological process"/>
    <property type="evidence" value="ECO:0000314"/>
    <property type="project" value="UniProtKB"/>
</dbReference>
<dbReference type="InterPro" id="IPR020128">
    <property type="entry name" value="Secapin"/>
</dbReference>
<dbReference type="Pfam" id="PF17521">
    <property type="entry name" value="Secapin"/>
    <property type="match status" value="1"/>
</dbReference>
<keyword id="KW-0044">Antibiotic</keyword>
<keyword id="KW-0929">Antimicrobial</keyword>
<keyword id="KW-0903">Direct protein sequencing</keyword>
<keyword id="KW-1015">Disulfide bond</keyword>
<keyword id="KW-0295">Fungicide</keyword>
<keyword id="KW-1199">Hemostasis impairing toxin</keyword>
<keyword id="KW-0391">Immunity</keyword>
<keyword id="KW-0399">Innate immunity</keyword>
<keyword id="KW-0646">Protease inhibitor</keyword>
<keyword id="KW-1185">Reference proteome</keyword>
<keyword id="KW-0964">Secreted</keyword>
<keyword id="KW-0722">Serine protease inhibitor</keyword>
<keyword id="KW-0732">Signal</keyword>
<keyword id="KW-0800">Toxin</keyword>
<protein>
    <recommendedName>
        <fullName>Secapin</fullName>
    </recommendedName>
</protein>
<comment type="function">
    <text evidence="1 3">Serine protease inhibitor which exhibits antifibrinolytic, antielastolytic and antimicrobial activities (By similarity). Displays antimicrobial activity against bacteria and fungi (By similarity). Likely functions in the innate immune response to microbial infection and possibly in the venom, as an antifibrinolytic agent (By similarity). Not toxic to mice but does induce slight sedation at higher doses (from 40 mg/kg) (PubMed:1248464). At a dose of 80 mg/kg, sedation occurs 15 minutes after injection and is accompanied by piloerection and hypothermia (PubMed:1248464).</text>
</comment>
<comment type="subcellular location">
    <subcellularLocation>
        <location evidence="4 7">Secreted</location>
    </subcellularLocation>
</comment>
<comment type="tissue specificity">
    <text evidence="4 5">Expressed by the venom gland.</text>
</comment>
<comment type="similarity">
    <text evidence="6">Belongs to the secapin family.</text>
</comment>
<reference key="1">
    <citation type="journal article" date="1984" name="Eur. J. Biochem.">
        <title>Nucleotide sequence of cloned cDNAs coding for preprosecapin, a major product of queen-bee venom glands.</title>
        <authorList>
            <person name="Vlasak R."/>
            <person name="Kreil G."/>
        </authorList>
    </citation>
    <scope>NUCLEOTIDE SEQUENCE [MRNA]</scope>
</reference>
<reference key="2">
    <citation type="submission" date="1986-06" db="EMBL/GenBank/DDBJ databases">
        <authorList>
            <person name="Kreil G."/>
        </authorList>
    </citation>
    <scope>SEQUENCE REVISION TO 39</scope>
</reference>
<reference key="3">
    <citation type="submission" date="2002-03" db="EMBL/GenBank/DDBJ databases">
        <title>Cloning and sequencing of cDNA encoding preprosecapin from the venom of Apis cerana cerana and Apis mellifera.</title>
        <authorList>
            <person name="Zhang S.F."/>
            <person name="Shi W.J."/>
            <person name="Zhang C.X."/>
            <person name="Cheng J.A."/>
        </authorList>
    </citation>
    <scope>NUCLEOTIDE SEQUENCE [MRNA]</scope>
    <source>
        <tissue>Venom gland</tissue>
    </source>
</reference>
<reference key="4">
    <citation type="journal article" date="1978" name="Eur. J. Biochem.">
        <title>The structures of some peptides from bee venom.</title>
        <authorList>
            <person name="Gauldie J."/>
            <person name="Hanson J.M."/>
            <person name="Shipolini R.A."/>
            <person name="Vernon C.A."/>
        </authorList>
    </citation>
    <scope>PROTEIN SEQUENCE OF 53-77</scope>
    <scope>DISULFIDE BOND</scope>
    <source>
        <tissue>Venom</tissue>
    </source>
</reference>
<reference key="5">
    <citation type="journal article" date="1976" name="Eur. J. Biochem.">
        <title>The peptide components of bee venom.</title>
        <authorList>
            <person name="Gauldie J."/>
            <person name="Hanson J.M."/>
            <person name="Rumjanek F.D."/>
            <person name="Shipolini R.A."/>
            <person name="Vernon C.A."/>
        </authorList>
    </citation>
    <scope>FUNCTION</scope>
</reference>
<feature type="signal peptide" evidence="2">
    <location>
        <begin position="1"/>
        <end position="32"/>
    </location>
</feature>
<feature type="propeptide" id="PRO_0000022290" evidence="4">
    <location>
        <begin position="33"/>
        <end position="52"/>
    </location>
</feature>
<feature type="peptide" id="PRO_0000022291" description="Secapin" evidence="4">
    <location>
        <begin position="53"/>
        <end position="77"/>
    </location>
</feature>
<feature type="disulfide bond" evidence="4">
    <location>
        <begin position="61"/>
        <end position="72"/>
    </location>
</feature>
<feature type="sequence conflict" description="In Ref. 1; AAA27733." evidence="6" ref="1">
    <original>MQP</original>
    <variation>RQS</variation>
    <location>
        <begin position="37"/>
        <end position="39"/>
    </location>
</feature>
<feature type="sequence conflict" description="In Ref. 4; AA sequence." evidence="6" ref="4">
    <original>IVP</original>
    <variation>PV</variation>
    <location>
        <begin position="75"/>
        <end position="77"/>
    </location>
</feature>